<evidence type="ECO:0000250" key="1"/>
<evidence type="ECO:0000255" key="2"/>
<evidence type="ECO:0000269" key="3">
    <source>
    </source>
</evidence>
<evidence type="ECO:0000303" key="4">
    <source>
    </source>
</evidence>
<evidence type="ECO:0000305" key="5"/>
<sequence>MKTQFTVLLITLVLFQMLSQSEAILSYLWNGIKSIFGKRGLSDLSDLDELFDGEITKADLDLLREIM</sequence>
<proteinExistence type="evidence at transcript level"/>
<accession>P0DME8</accession>
<protein>
    <recommendedName>
        <fullName evidence="4">Peptide Hp1239</fullName>
    </recommendedName>
</protein>
<comment type="function">
    <text evidence="1 3">Amphipathic peptide with antibacterial activities (By similarity). Shows antiviral activities against the herpes simplex virus type-1. It potently inhibits the initial infection by provoking the rupture of viral envelop and the dissociation of proteins from the virions (EC(50) is 0.41 uM). It also effectively inhibits viral attachment (EC(50) is 5.73 uM), viral entry (EC(50) is 4.32 uM) and viral proliferation after infection (EC(50) is 8.41 uM). Morever, it enters mammalian tested cells (Vero) and reduces the intracellular infectivity.</text>
</comment>
<comment type="subcellular location">
    <subcellularLocation>
        <location evidence="1">Secreted</location>
    </subcellularLocation>
    <subcellularLocation>
        <location evidence="1">Target cell membrane</location>
    </subcellularLocation>
    <text evidence="1">Forms an alpha-helical membrane channel in the prey.</text>
</comment>
<comment type="tissue specificity">
    <text>Expressed by the venom gland.</text>
</comment>
<comment type="similarity">
    <text evidence="5">Belongs to the non-disulfide-bridged peptide (NDBP) superfamily. Short antimicrobial peptide (group 4) family.</text>
</comment>
<dbReference type="SMR" id="P0DME8"/>
<dbReference type="GO" id="GO:0005576">
    <property type="term" value="C:extracellular region"/>
    <property type="evidence" value="ECO:0007669"/>
    <property type="project" value="UniProtKB-SubCell"/>
</dbReference>
<dbReference type="GO" id="GO:0016020">
    <property type="term" value="C:membrane"/>
    <property type="evidence" value="ECO:0007669"/>
    <property type="project" value="UniProtKB-KW"/>
</dbReference>
<dbReference type="GO" id="GO:0044218">
    <property type="term" value="C:other organism cell membrane"/>
    <property type="evidence" value="ECO:0007669"/>
    <property type="project" value="UniProtKB-KW"/>
</dbReference>
<dbReference type="GO" id="GO:0042742">
    <property type="term" value="P:defense response to bacterium"/>
    <property type="evidence" value="ECO:0007669"/>
    <property type="project" value="UniProtKB-KW"/>
</dbReference>
<dbReference type="GO" id="GO:0050688">
    <property type="term" value="P:regulation of defense response to virus"/>
    <property type="evidence" value="ECO:0007669"/>
    <property type="project" value="UniProtKB-KW"/>
</dbReference>
<feature type="signal peptide" evidence="2">
    <location>
        <begin position="1"/>
        <end position="23"/>
    </location>
</feature>
<feature type="peptide" id="PRO_0000428688" description="Peptide Hp1239">
    <location>
        <begin position="24"/>
        <end position="36"/>
    </location>
</feature>
<feature type="propeptide" id="PRO_0000428689" evidence="1">
    <location>
        <begin position="40"/>
        <end position="67"/>
    </location>
</feature>
<feature type="modified residue" description="Phenylalanine amide" evidence="1">
    <location>
        <position position="36"/>
    </location>
</feature>
<organism>
    <name type="scientific">Heterometrus petersii</name>
    <name type="common">Asian forest scorpion</name>
    <dbReference type="NCBI Taxonomy" id="754296"/>
    <lineage>
        <taxon>Eukaryota</taxon>
        <taxon>Metazoa</taxon>
        <taxon>Ecdysozoa</taxon>
        <taxon>Arthropoda</taxon>
        <taxon>Chelicerata</taxon>
        <taxon>Arachnida</taxon>
        <taxon>Scorpiones</taxon>
        <taxon>Iurida</taxon>
        <taxon>Scorpionoidea</taxon>
        <taxon>Scorpionidae</taxon>
        <taxon>Heterometrinae</taxon>
        <taxon>Heterometrus</taxon>
    </lineage>
</organism>
<keyword id="KW-0027">Amidation</keyword>
<keyword id="KW-0044">Antibiotic</keyword>
<keyword id="KW-0929">Antimicrobial</keyword>
<keyword id="KW-0930">Antiviral protein</keyword>
<keyword id="KW-0165">Cleavage on pair of basic residues</keyword>
<keyword id="KW-0472">Membrane</keyword>
<keyword id="KW-0964">Secreted</keyword>
<keyword id="KW-0732">Signal</keyword>
<keyword id="KW-1052">Target cell membrane</keyword>
<keyword id="KW-1053">Target membrane</keyword>
<name>NDB4V_HETPE</name>
<reference key="1">
    <citation type="journal article" date="2010" name="Proteomics">
        <title>Molecular diversity of toxic components from the scorpion Heterometrus petersii venom revealed by proteomic and transcriptome analysis.</title>
        <authorList>
            <person name="Ma Y."/>
            <person name="Zhao Y."/>
            <person name="Zhao R."/>
            <person name="Zhang W."/>
            <person name="He Y."/>
            <person name="Wu Y."/>
            <person name="Cao Z."/>
            <person name="Guo L."/>
            <person name="Li W."/>
        </authorList>
    </citation>
    <scope>NUCLEOTIDE SEQUENCE [MRNA]</scope>
    <source>
        <tissue>Venom gland</tissue>
    </source>
</reference>
<reference key="2">
    <citation type="journal article" date="2014" name="Antiviral Res.">
        <title>Inhibitory activity and mechanism of two scorpion venom peptides against herpes simplex virus type 1.</title>
        <authorList>
            <person name="Hong W."/>
            <person name="Li T."/>
            <person name="Song Y."/>
            <person name="Zhang R."/>
            <person name="Zeng Z."/>
            <person name="Han S."/>
            <person name="Zhang X."/>
            <person name="Wu Y."/>
            <person name="Li W."/>
            <person name="Cao Z."/>
        </authorList>
    </citation>
    <scope>SYNTHESIS OF 24-36</scope>
    <scope>FUNCTION</scope>
    <scope>CIRCULAR DICHROISM ANALYSIS</scope>
</reference>